<accession>P33245</accession>
<sequence length="587" mass="67496">MTQINFNASYTSAPTPSRASFDNGYSEFCDKQQPNDYLNYYNNPTPDGADTVVSDSRLQAASNFLASVNSLTDDNDIMECLLKTTDNLGEAVSSAYNAESFELPVAEQPSPSSAYNAESFEHPVGVNQPSATGTKRKLDEYLDDSQSVVGQFNKNKLKPKYKKSTIQSCATLEQTINHNTNICTVASTQEITHYFTNDFAPYLMRFDDNDYNSNRFSDHMSETGYYMFVVKKSEVKPFEIIFAKYVSNVVYEYTNNYYMVDNRVFVVTFDKIRFMISYNLVKETGIEIPHSQDVCNDETAAQNCKKCHFVDVHHTFKAALTSYFNLDMYYAQTTFVTLLQSLGERKCGFLLSKLYEMYQDKNLFTLPIMLSRKESNEIETASNNFFVSPYVSQILKYSESIRKVKFPDNPPNKYVVDNLNLIVNKKSTLTYKYSSVANLLFNNYKYHDNIASNNNAENLKKVKKEDGSMHIVEQYLTQNVDNVKGHNFIVLSFKNEERLTIAKKNEEFYWISGEIKDVDASQVIQKYNRFKHHMFVISKVNRRESTTLHNNLLKLLALILQGLVPLSDAITFAEQKLNCKYKKFEFN</sequence>
<comment type="function">
    <text>Regulatory transcriptional protein, which trans-activates gene expression from early baculovirus promoters. Can also trans-activate its own promoter, suggesting that it is autoregulated during normal infection of insect cells.</text>
</comment>
<comment type="similarity">
    <text evidence="1">Belongs to the nucleopolyhedrovirus IE-1 protein family.</text>
</comment>
<name>TATR_NPVBM</name>
<feature type="chain" id="PRO_0000132849" description="Trans-activating transcriptional regulatory protein">
    <location>
        <begin position="1"/>
        <end position="587"/>
    </location>
</feature>
<gene>
    <name type="primary">IE1</name>
</gene>
<reference key="1">
    <citation type="journal article" date="1992" name="Biochim. Biophys. Acta">
        <title>Nucleotide sequence of a transactivating Bombyx mori nuclear polyhedrosis virus immediate early gene.</title>
        <authorList>
            <person name="Huybrechts R."/>
            <person name="Guarino L."/>
            <person name="van Brussel M."/>
            <person name="Vulsteke V."/>
        </authorList>
    </citation>
    <scope>NUCLEOTIDE SEQUENCE [GENOMIC DNA]</scope>
</reference>
<protein>
    <recommendedName>
        <fullName>Trans-activating transcriptional regulatory protein</fullName>
    </recommendedName>
    <alternativeName>
        <fullName>Immediate early protein 1</fullName>
        <shortName>IE-1</shortName>
    </alternativeName>
</protein>
<dbReference type="EMBL" id="X58442">
    <property type="protein sequence ID" value="CAA41348.1"/>
    <property type="molecule type" value="Genomic_DNA"/>
</dbReference>
<dbReference type="PIR" id="S20596">
    <property type="entry name" value="S20596"/>
</dbReference>
<dbReference type="GO" id="GO:0019079">
    <property type="term" value="P:viral genome replication"/>
    <property type="evidence" value="ECO:0000250"/>
    <property type="project" value="UniProtKB"/>
</dbReference>
<dbReference type="InterPro" id="IPR005092">
    <property type="entry name" value="TATR"/>
</dbReference>
<dbReference type="Pfam" id="PF03430">
    <property type="entry name" value="TATR"/>
    <property type="match status" value="1"/>
</dbReference>
<keyword id="KW-0244">Early protein</keyword>
<keyword id="KW-0804">Transcription</keyword>
<keyword id="KW-0805">Transcription regulation</keyword>
<evidence type="ECO:0000305" key="1"/>
<organism>
    <name type="scientific">Bombyx mori nuclear polyhedrosis virus</name>
    <name type="common">BmNPV</name>
    <dbReference type="NCBI Taxonomy" id="271108"/>
    <lineage>
        <taxon>Viruses</taxon>
        <taxon>Viruses incertae sedis</taxon>
        <taxon>Naldaviricetes</taxon>
        <taxon>Lefavirales</taxon>
        <taxon>Baculoviridae</taxon>
        <taxon>Alphabaculovirus</taxon>
        <taxon>Alphabaculovirus bomori</taxon>
    </lineage>
</organism>
<proteinExistence type="inferred from homology"/>
<organismHost>
    <name type="scientific">Bombyx mori</name>
    <name type="common">Silk moth</name>
    <dbReference type="NCBI Taxonomy" id="7091"/>
</organismHost>